<protein>
    <recommendedName>
        <fullName evidence="1">Ribosome maturation factor RimM</fullName>
    </recommendedName>
</protein>
<organism>
    <name type="scientific">Escherichia fergusonii (strain ATCC 35469 / DSM 13698 / CCUG 18766 / IAM 14443 / JCM 21226 / LMG 7866 / NBRC 102419 / NCTC 12128 / CDC 0568-73)</name>
    <dbReference type="NCBI Taxonomy" id="585054"/>
    <lineage>
        <taxon>Bacteria</taxon>
        <taxon>Pseudomonadati</taxon>
        <taxon>Pseudomonadota</taxon>
        <taxon>Gammaproteobacteria</taxon>
        <taxon>Enterobacterales</taxon>
        <taxon>Enterobacteriaceae</taxon>
        <taxon>Escherichia</taxon>
    </lineage>
</organism>
<evidence type="ECO:0000255" key="1">
    <source>
        <dbReference type="HAMAP-Rule" id="MF_00014"/>
    </source>
</evidence>
<feature type="chain" id="PRO_1000196562" description="Ribosome maturation factor RimM">
    <location>
        <begin position="1"/>
        <end position="182"/>
    </location>
</feature>
<feature type="domain" description="PRC barrel" evidence="1">
    <location>
        <begin position="102"/>
        <end position="182"/>
    </location>
</feature>
<keyword id="KW-0143">Chaperone</keyword>
<keyword id="KW-0963">Cytoplasm</keyword>
<keyword id="KW-0690">Ribosome biogenesis</keyword>
<keyword id="KW-0698">rRNA processing</keyword>
<accession>B7LUW5</accession>
<dbReference type="EMBL" id="CU928158">
    <property type="protein sequence ID" value="CAQ88023.1"/>
    <property type="molecule type" value="Genomic_DNA"/>
</dbReference>
<dbReference type="RefSeq" id="WP_000043330.1">
    <property type="nucleotide sequence ID" value="NC_011740.1"/>
</dbReference>
<dbReference type="SMR" id="B7LUW5"/>
<dbReference type="GeneID" id="75058467"/>
<dbReference type="KEGG" id="efe:EFER_0464"/>
<dbReference type="HOGENOM" id="CLU_077636_1_0_6"/>
<dbReference type="OrthoDB" id="9783509at2"/>
<dbReference type="Proteomes" id="UP000000745">
    <property type="component" value="Chromosome"/>
</dbReference>
<dbReference type="GO" id="GO:0005737">
    <property type="term" value="C:cytoplasm"/>
    <property type="evidence" value="ECO:0007669"/>
    <property type="project" value="UniProtKB-SubCell"/>
</dbReference>
<dbReference type="GO" id="GO:0005840">
    <property type="term" value="C:ribosome"/>
    <property type="evidence" value="ECO:0007669"/>
    <property type="project" value="InterPro"/>
</dbReference>
<dbReference type="GO" id="GO:0043022">
    <property type="term" value="F:ribosome binding"/>
    <property type="evidence" value="ECO:0007669"/>
    <property type="project" value="InterPro"/>
</dbReference>
<dbReference type="GO" id="GO:0042274">
    <property type="term" value="P:ribosomal small subunit biogenesis"/>
    <property type="evidence" value="ECO:0007669"/>
    <property type="project" value="UniProtKB-UniRule"/>
</dbReference>
<dbReference type="GO" id="GO:0006364">
    <property type="term" value="P:rRNA processing"/>
    <property type="evidence" value="ECO:0007669"/>
    <property type="project" value="UniProtKB-UniRule"/>
</dbReference>
<dbReference type="FunFam" id="2.30.30.240:FF:000001">
    <property type="entry name" value="Ribosome maturation factor RimM"/>
    <property type="match status" value="1"/>
</dbReference>
<dbReference type="FunFam" id="2.40.30.60:FF:000001">
    <property type="entry name" value="Ribosome maturation factor RimM"/>
    <property type="match status" value="1"/>
</dbReference>
<dbReference type="Gene3D" id="2.30.30.240">
    <property type="entry name" value="PRC-barrel domain"/>
    <property type="match status" value="1"/>
</dbReference>
<dbReference type="Gene3D" id="2.40.30.60">
    <property type="entry name" value="RimM"/>
    <property type="match status" value="1"/>
</dbReference>
<dbReference type="HAMAP" id="MF_00014">
    <property type="entry name" value="Ribosome_mat_RimM"/>
    <property type="match status" value="1"/>
</dbReference>
<dbReference type="InterPro" id="IPR011033">
    <property type="entry name" value="PRC_barrel-like_sf"/>
</dbReference>
<dbReference type="InterPro" id="IPR056792">
    <property type="entry name" value="PRC_RimM"/>
</dbReference>
<dbReference type="InterPro" id="IPR011961">
    <property type="entry name" value="RimM"/>
</dbReference>
<dbReference type="InterPro" id="IPR002676">
    <property type="entry name" value="RimM_N"/>
</dbReference>
<dbReference type="InterPro" id="IPR036976">
    <property type="entry name" value="RimM_N_sf"/>
</dbReference>
<dbReference type="InterPro" id="IPR009000">
    <property type="entry name" value="Transl_B-barrel_sf"/>
</dbReference>
<dbReference type="NCBIfam" id="TIGR02273">
    <property type="entry name" value="16S_RimM"/>
    <property type="match status" value="1"/>
</dbReference>
<dbReference type="PANTHER" id="PTHR33692">
    <property type="entry name" value="RIBOSOME MATURATION FACTOR RIMM"/>
    <property type="match status" value="1"/>
</dbReference>
<dbReference type="PANTHER" id="PTHR33692:SF1">
    <property type="entry name" value="RIBOSOME MATURATION FACTOR RIMM"/>
    <property type="match status" value="1"/>
</dbReference>
<dbReference type="Pfam" id="PF24986">
    <property type="entry name" value="PRC_RimM"/>
    <property type="match status" value="1"/>
</dbReference>
<dbReference type="Pfam" id="PF01782">
    <property type="entry name" value="RimM"/>
    <property type="match status" value="1"/>
</dbReference>
<dbReference type="SUPFAM" id="SSF50346">
    <property type="entry name" value="PRC-barrel domain"/>
    <property type="match status" value="1"/>
</dbReference>
<dbReference type="SUPFAM" id="SSF50447">
    <property type="entry name" value="Translation proteins"/>
    <property type="match status" value="1"/>
</dbReference>
<reference key="1">
    <citation type="journal article" date="2009" name="PLoS Genet.">
        <title>Organised genome dynamics in the Escherichia coli species results in highly diverse adaptive paths.</title>
        <authorList>
            <person name="Touchon M."/>
            <person name="Hoede C."/>
            <person name="Tenaillon O."/>
            <person name="Barbe V."/>
            <person name="Baeriswyl S."/>
            <person name="Bidet P."/>
            <person name="Bingen E."/>
            <person name="Bonacorsi S."/>
            <person name="Bouchier C."/>
            <person name="Bouvet O."/>
            <person name="Calteau A."/>
            <person name="Chiapello H."/>
            <person name="Clermont O."/>
            <person name="Cruveiller S."/>
            <person name="Danchin A."/>
            <person name="Diard M."/>
            <person name="Dossat C."/>
            <person name="Karoui M.E."/>
            <person name="Frapy E."/>
            <person name="Garry L."/>
            <person name="Ghigo J.M."/>
            <person name="Gilles A.M."/>
            <person name="Johnson J."/>
            <person name="Le Bouguenec C."/>
            <person name="Lescat M."/>
            <person name="Mangenot S."/>
            <person name="Martinez-Jehanne V."/>
            <person name="Matic I."/>
            <person name="Nassif X."/>
            <person name="Oztas S."/>
            <person name="Petit M.A."/>
            <person name="Pichon C."/>
            <person name="Rouy Z."/>
            <person name="Ruf C.S."/>
            <person name="Schneider D."/>
            <person name="Tourret J."/>
            <person name="Vacherie B."/>
            <person name="Vallenet D."/>
            <person name="Medigue C."/>
            <person name="Rocha E.P.C."/>
            <person name="Denamur E."/>
        </authorList>
    </citation>
    <scope>NUCLEOTIDE SEQUENCE [LARGE SCALE GENOMIC DNA]</scope>
    <source>
        <strain>ATCC 35469 / DSM 13698 / BCRC 15582 / CCUG 18766 / IAM 14443 / JCM 21226 / LMG 7866 / NBRC 102419 / NCTC 12128 / CDC 0568-73</strain>
    </source>
</reference>
<name>RIMM_ESCF3</name>
<comment type="function">
    <text evidence="1">An accessory protein needed during the final step in the assembly of 30S ribosomal subunit, possibly for assembly of the head region. Essential for efficient processing of 16S rRNA. May be needed both before and after RbfA during the maturation of 16S rRNA. It has affinity for free ribosomal 30S subunits but not for 70S ribosomes.</text>
</comment>
<comment type="subunit">
    <text evidence="1">Binds ribosomal protein uS19.</text>
</comment>
<comment type="subcellular location">
    <subcellularLocation>
        <location evidence="1">Cytoplasm</location>
    </subcellularLocation>
</comment>
<comment type="domain">
    <text evidence="1">The PRC barrel domain binds ribosomal protein uS19.</text>
</comment>
<comment type="similarity">
    <text evidence="1">Belongs to the RimM family.</text>
</comment>
<proteinExistence type="inferred from homology"/>
<sequence length="182" mass="20619">MSKQLTAQAPVDPIVLGKMGSSYGIRGWLRVFSSTEDAESIFDYQPWFIQKAGQWQQVQLESWKHHNQDMIIKLKGVDDRDAANLLTNCEIVVDSSQLPQLEEGDYYWKDLMGCQVVTTEGYDLGKVIDMMETGSNDVLVIKANLKDAFGIKERLVPFLDGQVIKKVDLTTRSIEVDWDPGF</sequence>
<gene>
    <name evidence="1" type="primary">rimM</name>
    <name type="ordered locus">EFER_0464</name>
</gene>